<keyword id="KW-0067">ATP-binding</keyword>
<keyword id="KW-0238">DNA-binding</keyword>
<keyword id="KW-0479">Metal-binding</keyword>
<keyword id="KW-0547">Nucleotide-binding</keyword>
<keyword id="KW-1185">Reference proteome</keyword>
<keyword id="KW-0678">Repressor</keyword>
<keyword id="KW-0804">Transcription</keyword>
<keyword id="KW-0805">Transcription regulation</keyword>
<keyword id="KW-0862">Zinc</keyword>
<keyword id="KW-0863">Zinc-finger</keyword>
<name>NRDR_GEOMG</name>
<dbReference type="EMBL" id="CP000148">
    <property type="protein sequence ID" value="ABB31854.1"/>
    <property type="molecule type" value="Genomic_DNA"/>
</dbReference>
<dbReference type="RefSeq" id="WP_004511441.1">
    <property type="nucleotide sequence ID" value="NC_007517.1"/>
</dbReference>
<dbReference type="SMR" id="Q39V70"/>
<dbReference type="STRING" id="269799.Gmet_1623"/>
<dbReference type="KEGG" id="gme:Gmet_1623"/>
<dbReference type="eggNOG" id="COG1327">
    <property type="taxonomic scope" value="Bacteria"/>
</dbReference>
<dbReference type="HOGENOM" id="CLU_108412_0_0_7"/>
<dbReference type="Proteomes" id="UP000007073">
    <property type="component" value="Chromosome"/>
</dbReference>
<dbReference type="GO" id="GO:0005524">
    <property type="term" value="F:ATP binding"/>
    <property type="evidence" value="ECO:0007669"/>
    <property type="project" value="UniProtKB-KW"/>
</dbReference>
<dbReference type="GO" id="GO:0003677">
    <property type="term" value="F:DNA binding"/>
    <property type="evidence" value="ECO:0007669"/>
    <property type="project" value="UniProtKB-KW"/>
</dbReference>
<dbReference type="GO" id="GO:0008270">
    <property type="term" value="F:zinc ion binding"/>
    <property type="evidence" value="ECO:0007669"/>
    <property type="project" value="UniProtKB-UniRule"/>
</dbReference>
<dbReference type="GO" id="GO:0045892">
    <property type="term" value="P:negative regulation of DNA-templated transcription"/>
    <property type="evidence" value="ECO:0007669"/>
    <property type="project" value="UniProtKB-UniRule"/>
</dbReference>
<dbReference type="HAMAP" id="MF_00440">
    <property type="entry name" value="NrdR"/>
    <property type="match status" value="1"/>
</dbReference>
<dbReference type="InterPro" id="IPR005144">
    <property type="entry name" value="ATP-cone_dom"/>
</dbReference>
<dbReference type="InterPro" id="IPR055173">
    <property type="entry name" value="NrdR-like_N"/>
</dbReference>
<dbReference type="InterPro" id="IPR003796">
    <property type="entry name" value="RNR_NrdR-like"/>
</dbReference>
<dbReference type="NCBIfam" id="TIGR00244">
    <property type="entry name" value="transcriptional regulator NrdR"/>
    <property type="match status" value="1"/>
</dbReference>
<dbReference type="PANTHER" id="PTHR30455">
    <property type="entry name" value="TRANSCRIPTIONAL REPRESSOR NRDR"/>
    <property type="match status" value="1"/>
</dbReference>
<dbReference type="PANTHER" id="PTHR30455:SF2">
    <property type="entry name" value="TRANSCRIPTIONAL REPRESSOR NRDR"/>
    <property type="match status" value="1"/>
</dbReference>
<dbReference type="Pfam" id="PF03477">
    <property type="entry name" value="ATP-cone"/>
    <property type="match status" value="1"/>
</dbReference>
<dbReference type="Pfam" id="PF22811">
    <property type="entry name" value="Zn_ribbon_NrdR"/>
    <property type="match status" value="1"/>
</dbReference>
<dbReference type="PROSITE" id="PS51161">
    <property type="entry name" value="ATP_CONE"/>
    <property type="match status" value="1"/>
</dbReference>
<reference key="1">
    <citation type="journal article" date="2009" name="BMC Microbiol.">
        <title>The genome sequence of Geobacter metallireducens: features of metabolism, physiology and regulation common and dissimilar to Geobacter sulfurreducens.</title>
        <authorList>
            <person name="Aklujkar M."/>
            <person name="Krushkal J."/>
            <person name="DiBartolo G."/>
            <person name="Lapidus A."/>
            <person name="Land M.L."/>
            <person name="Lovley D.R."/>
        </authorList>
    </citation>
    <scope>NUCLEOTIDE SEQUENCE [LARGE SCALE GENOMIC DNA]</scope>
    <source>
        <strain>ATCC 53774 / DSM 7210 / GS-15</strain>
    </source>
</reference>
<feature type="chain" id="PRO_0000230870" description="Transcriptional repressor NrdR">
    <location>
        <begin position="1"/>
        <end position="150"/>
    </location>
</feature>
<feature type="domain" description="ATP-cone" evidence="1">
    <location>
        <begin position="49"/>
        <end position="139"/>
    </location>
</feature>
<feature type="zinc finger region" evidence="1">
    <location>
        <begin position="3"/>
        <end position="34"/>
    </location>
</feature>
<organism>
    <name type="scientific">Geobacter metallireducens (strain ATCC 53774 / DSM 7210 / GS-15)</name>
    <dbReference type="NCBI Taxonomy" id="269799"/>
    <lineage>
        <taxon>Bacteria</taxon>
        <taxon>Pseudomonadati</taxon>
        <taxon>Thermodesulfobacteriota</taxon>
        <taxon>Desulfuromonadia</taxon>
        <taxon>Geobacterales</taxon>
        <taxon>Geobacteraceae</taxon>
        <taxon>Geobacter</taxon>
    </lineage>
</organism>
<comment type="function">
    <text evidence="1">Negatively regulates transcription of bacterial ribonucleotide reductase nrd genes and operons by binding to NrdR-boxes.</text>
</comment>
<comment type="cofactor">
    <cofactor evidence="1">
        <name>Zn(2+)</name>
        <dbReference type="ChEBI" id="CHEBI:29105"/>
    </cofactor>
    <text evidence="1">Binds 1 zinc ion.</text>
</comment>
<comment type="similarity">
    <text evidence="1">Belongs to the NrdR family.</text>
</comment>
<gene>
    <name evidence="1" type="primary">nrdR</name>
    <name type="ordered locus">Gmet_1623</name>
</gene>
<sequence>MKCPFCAHPDSKVVDSRPDKGGAAIRRRRECESCAKRFTTHERIEETLPLVLKKDGRREPFDRMKIVGGILKACEKRQVSRETVDRLVDRLEGRLQEWSEKEVPSTTIGEWVMTELHDIDEVAYVRFASVYRSFKDVNEFMAELQDLLKK</sequence>
<evidence type="ECO:0000255" key="1">
    <source>
        <dbReference type="HAMAP-Rule" id="MF_00440"/>
    </source>
</evidence>
<proteinExistence type="inferred from homology"/>
<accession>Q39V70</accession>
<protein>
    <recommendedName>
        <fullName evidence="1">Transcriptional repressor NrdR</fullName>
    </recommendedName>
</protein>